<name>RF3_STAAS</name>
<keyword id="KW-0963">Cytoplasm</keyword>
<keyword id="KW-0342">GTP-binding</keyword>
<keyword id="KW-0547">Nucleotide-binding</keyword>
<keyword id="KW-0648">Protein biosynthesis</keyword>
<proteinExistence type="inferred from homology"/>
<dbReference type="EMBL" id="BX571857">
    <property type="protein sequence ID" value="CAG42664.1"/>
    <property type="molecule type" value="Genomic_DNA"/>
</dbReference>
<dbReference type="RefSeq" id="WP_001049957.1">
    <property type="nucleotide sequence ID" value="NC_002953.3"/>
</dbReference>
<dbReference type="SMR" id="Q6GAQ7"/>
<dbReference type="KEGG" id="sas:SAS0889"/>
<dbReference type="HOGENOM" id="CLU_002794_2_1_9"/>
<dbReference type="GO" id="GO:0005829">
    <property type="term" value="C:cytosol"/>
    <property type="evidence" value="ECO:0007669"/>
    <property type="project" value="TreeGrafter"/>
</dbReference>
<dbReference type="GO" id="GO:0005525">
    <property type="term" value="F:GTP binding"/>
    <property type="evidence" value="ECO:0007669"/>
    <property type="project" value="UniProtKB-UniRule"/>
</dbReference>
<dbReference type="GO" id="GO:0003924">
    <property type="term" value="F:GTPase activity"/>
    <property type="evidence" value="ECO:0007669"/>
    <property type="project" value="InterPro"/>
</dbReference>
<dbReference type="GO" id="GO:0016150">
    <property type="term" value="F:translation release factor activity, codon nonspecific"/>
    <property type="evidence" value="ECO:0007669"/>
    <property type="project" value="TreeGrafter"/>
</dbReference>
<dbReference type="GO" id="GO:0016149">
    <property type="term" value="F:translation release factor activity, codon specific"/>
    <property type="evidence" value="ECO:0007669"/>
    <property type="project" value="UniProtKB-UniRule"/>
</dbReference>
<dbReference type="GO" id="GO:0006449">
    <property type="term" value="P:regulation of translational termination"/>
    <property type="evidence" value="ECO:0007669"/>
    <property type="project" value="UniProtKB-UniRule"/>
</dbReference>
<dbReference type="CDD" id="cd04169">
    <property type="entry name" value="RF3"/>
    <property type="match status" value="1"/>
</dbReference>
<dbReference type="CDD" id="cd16259">
    <property type="entry name" value="RF3_III"/>
    <property type="match status" value="1"/>
</dbReference>
<dbReference type="FunFam" id="2.40.30.10:FF:000040">
    <property type="entry name" value="Peptide chain release factor 3"/>
    <property type="match status" value="1"/>
</dbReference>
<dbReference type="FunFam" id="3.30.70.3280:FF:000001">
    <property type="entry name" value="Peptide chain release factor 3"/>
    <property type="match status" value="1"/>
</dbReference>
<dbReference type="FunFam" id="3.40.50.300:FF:000542">
    <property type="entry name" value="Peptide chain release factor 3"/>
    <property type="match status" value="1"/>
</dbReference>
<dbReference type="Gene3D" id="3.40.50.300">
    <property type="entry name" value="P-loop containing nucleotide triphosphate hydrolases"/>
    <property type="match status" value="1"/>
</dbReference>
<dbReference type="Gene3D" id="3.30.70.3280">
    <property type="entry name" value="Peptide chain release factor 3, domain III"/>
    <property type="match status" value="1"/>
</dbReference>
<dbReference type="Gene3D" id="2.40.30.10">
    <property type="entry name" value="Translation factors"/>
    <property type="match status" value="1"/>
</dbReference>
<dbReference type="HAMAP" id="MF_00072">
    <property type="entry name" value="Rel_fac_3"/>
    <property type="match status" value="1"/>
</dbReference>
<dbReference type="InterPro" id="IPR053905">
    <property type="entry name" value="EF-G-like_DII"/>
</dbReference>
<dbReference type="InterPro" id="IPR035647">
    <property type="entry name" value="EFG_III/V"/>
</dbReference>
<dbReference type="InterPro" id="IPR031157">
    <property type="entry name" value="G_TR_CS"/>
</dbReference>
<dbReference type="InterPro" id="IPR027417">
    <property type="entry name" value="P-loop_NTPase"/>
</dbReference>
<dbReference type="InterPro" id="IPR004548">
    <property type="entry name" value="PrfC"/>
</dbReference>
<dbReference type="InterPro" id="IPR032090">
    <property type="entry name" value="RF3_C"/>
</dbReference>
<dbReference type="InterPro" id="IPR038467">
    <property type="entry name" value="RF3_dom_3_sf"/>
</dbReference>
<dbReference type="InterPro" id="IPR041732">
    <property type="entry name" value="RF3_GTP-bd"/>
</dbReference>
<dbReference type="InterPro" id="IPR005225">
    <property type="entry name" value="Small_GTP-bd"/>
</dbReference>
<dbReference type="InterPro" id="IPR000795">
    <property type="entry name" value="T_Tr_GTP-bd_dom"/>
</dbReference>
<dbReference type="InterPro" id="IPR009000">
    <property type="entry name" value="Transl_B-barrel_sf"/>
</dbReference>
<dbReference type="NCBIfam" id="TIGR00503">
    <property type="entry name" value="prfC"/>
    <property type="match status" value="1"/>
</dbReference>
<dbReference type="NCBIfam" id="NF001964">
    <property type="entry name" value="PRK00741.1"/>
    <property type="match status" value="1"/>
</dbReference>
<dbReference type="NCBIfam" id="TIGR00231">
    <property type="entry name" value="small_GTP"/>
    <property type="match status" value="1"/>
</dbReference>
<dbReference type="PANTHER" id="PTHR43556">
    <property type="entry name" value="PEPTIDE CHAIN RELEASE FACTOR RF3"/>
    <property type="match status" value="1"/>
</dbReference>
<dbReference type="PANTHER" id="PTHR43556:SF2">
    <property type="entry name" value="PEPTIDE CHAIN RELEASE FACTOR RF3"/>
    <property type="match status" value="1"/>
</dbReference>
<dbReference type="Pfam" id="PF22042">
    <property type="entry name" value="EF-G_D2"/>
    <property type="match status" value="1"/>
</dbReference>
<dbReference type="Pfam" id="PF00009">
    <property type="entry name" value="GTP_EFTU"/>
    <property type="match status" value="1"/>
</dbReference>
<dbReference type="Pfam" id="PF16658">
    <property type="entry name" value="RF3_C"/>
    <property type="match status" value="1"/>
</dbReference>
<dbReference type="PRINTS" id="PR00315">
    <property type="entry name" value="ELONGATNFCT"/>
</dbReference>
<dbReference type="SUPFAM" id="SSF54980">
    <property type="entry name" value="EF-G C-terminal domain-like"/>
    <property type="match status" value="1"/>
</dbReference>
<dbReference type="SUPFAM" id="SSF52540">
    <property type="entry name" value="P-loop containing nucleoside triphosphate hydrolases"/>
    <property type="match status" value="1"/>
</dbReference>
<dbReference type="SUPFAM" id="SSF50447">
    <property type="entry name" value="Translation proteins"/>
    <property type="match status" value="1"/>
</dbReference>
<dbReference type="PROSITE" id="PS00301">
    <property type="entry name" value="G_TR_1"/>
    <property type="match status" value="1"/>
</dbReference>
<dbReference type="PROSITE" id="PS51722">
    <property type="entry name" value="G_TR_2"/>
    <property type="match status" value="1"/>
</dbReference>
<evidence type="ECO:0000255" key="1">
    <source>
        <dbReference type="HAMAP-Rule" id="MF_00072"/>
    </source>
</evidence>
<reference key="1">
    <citation type="journal article" date="2004" name="Proc. Natl. Acad. Sci. U.S.A.">
        <title>Complete genomes of two clinical Staphylococcus aureus strains: evidence for the rapid evolution of virulence and drug resistance.</title>
        <authorList>
            <person name="Holden M.T.G."/>
            <person name="Feil E.J."/>
            <person name="Lindsay J.A."/>
            <person name="Peacock S.J."/>
            <person name="Day N.P.J."/>
            <person name="Enright M.C."/>
            <person name="Foster T.J."/>
            <person name="Moore C.E."/>
            <person name="Hurst L."/>
            <person name="Atkin R."/>
            <person name="Barron A."/>
            <person name="Bason N."/>
            <person name="Bentley S.D."/>
            <person name="Chillingworth C."/>
            <person name="Chillingworth T."/>
            <person name="Churcher C."/>
            <person name="Clark L."/>
            <person name="Corton C."/>
            <person name="Cronin A."/>
            <person name="Doggett J."/>
            <person name="Dowd L."/>
            <person name="Feltwell T."/>
            <person name="Hance Z."/>
            <person name="Harris B."/>
            <person name="Hauser H."/>
            <person name="Holroyd S."/>
            <person name="Jagels K."/>
            <person name="James K.D."/>
            <person name="Lennard N."/>
            <person name="Line A."/>
            <person name="Mayes R."/>
            <person name="Moule S."/>
            <person name="Mungall K."/>
            <person name="Ormond D."/>
            <person name="Quail M.A."/>
            <person name="Rabbinowitsch E."/>
            <person name="Rutherford K.M."/>
            <person name="Sanders M."/>
            <person name="Sharp S."/>
            <person name="Simmonds M."/>
            <person name="Stevens K."/>
            <person name="Whitehead S."/>
            <person name="Barrell B.G."/>
            <person name="Spratt B.G."/>
            <person name="Parkhill J."/>
        </authorList>
    </citation>
    <scope>NUCLEOTIDE SEQUENCE [LARGE SCALE GENOMIC DNA]</scope>
    <source>
        <strain>MSSA476</strain>
    </source>
</reference>
<comment type="function">
    <text evidence="1">Increases the formation of ribosomal termination complexes and stimulates activities of RF-1 and RF-2. It binds guanine nucleotides and has strong preference for UGA stop codons. It may interact directly with the ribosome. The stimulation of RF-1 and RF-2 is significantly reduced by GTP and GDP, but not by GMP.</text>
</comment>
<comment type="subcellular location">
    <subcellularLocation>
        <location evidence="1">Cytoplasm</location>
    </subcellularLocation>
</comment>
<comment type="similarity">
    <text evidence="1">Belongs to the TRAFAC class translation factor GTPase superfamily. Classic translation factor GTPase family. PrfC subfamily.</text>
</comment>
<accession>Q6GAQ7</accession>
<protein>
    <recommendedName>
        <fullName evidence="1">Peptide chain release factor 3</fullName>
        <shortName evidence="1">RF-3</shortName>
    </recommendedName>
</protein>
<feature type="chain" id="PRO_0000210965" description="Peptide chain release factor 3">
    <location>
        <begin position="1"/>
        <end position="520"/>
    </location>
</feature>
<feature type="domain" description="tr-type G">
    <location>
        <begin position="8"/>
        <end position="277"/>
    </location>
</feature>
<feature type="binding site" evidence="1">
    <location>
        <begin position="17"/>
        <end position="24"/>
    </location>
    <ligand>
        <name>GTP</name>
        <dbReference type="ChEBI" id="CHEBI:37565"/>
    </ligand>
</feature>
<feature type="binding site" evidence="1">
    <location>
        <begin position="85"/>
        <end position="89"/>
    </location>
    <ligand>
        <name>GTP</name>
        <dbReference type="ChEBI" id="CHEBI:37565"/>
    </ligand>
</feature>
<feature type="binding site" evidence="1">
    <location>
        <begin position="139"/>
        <end position="142"/>
    </location>
    <ligand>
        <name>GTP</name>
        <dbReference type="ChEBI" id="CHEBI:37565"/>
    </ligand>
</feature>
<sequence length="520" mass="59572">MNLKQEVESRKTFAIISHPDAGKTTLTEKLLYFSGAIREAGTVKGKKTGKFATSDWMKVEQERGISVTSSVMQFDYDDYKINILDTPGHEDFSEDTYRTLMAVDSAVMVIDCAKGIEPQTLKLFKVCKMRGIPIFTFINKLDRVGKEPFELLDEIEETLNIETYPMNWPIGMGQSFFGIIDRKSKTIEPFRDEENILHLNDDFELEEDHAITNDSAFEQAIEELMLVEEAGEAFDNDALLSGDLTPVFFGSALANFGVQNFLNAYVDFAPMPNARQTKEEVEVSPFDDSFSGFIFKIQANMDPKHRDRIAFMRVVSGAFERGMDVTLQRTNKKQKITRSTSFMADDKETVNHAVAGDIIGLYDTGNYQIGDTLVGGKQTYSFQDLPQFTPEIFMKVSAKNVMKQKHFHKGIEQLVQEGAIQYYKTLHTNQIILGAVGQLQFEVFEHRMKNEYNVDVVMEPVGRKIARWIENEDQITDKMNTSRSILVKDRYDDLVFLFENEFATRWFEEKFPEIKLYSLL</sequence>
<gene>
    <name evidence="1" type="primary">prfC</name>
    <name type="ordered locus">SAS0889</name>
</gene>
<organism>
    <name type="scientific">Staphylococcus aureus (strain MSSA476)</name>
    <dbReference type="NCBI Taxonomy" id="282459"/>
    <lineage>
        <taxon>Bacteria</taxon>
        <taxon>Bacillati</taxon>
        <taxon>Bacillota</taxon>
        <taxon>Bacilli</taxon>
        <taxon>Bacillales</taxon>
        <taxon>Staphylococcaceae</taxon>
        <taxon>Staphylococcus</taxon>
    </lineage>
</organism>